<proteinExistence type="evidence at transcript level"/>
<accession>A0RZC6</accession>
<sequence>MEGMALYLVAALLIGFPGSSHGALYTLITPGVLRTDTEEQILVEAHGDSAPKQPVISIHDFPRRQKILFQIRVDMNPAGGMLVTPTIKIPAKELNKESRQNQYVVVKVSGLPLELEKVVLLSSQSGFVFIQTDKGIYTPGSLVRYRVFSMDYNMHRMDKTVIVEFQTPEGVVVSSNPINPSSVLIRHYNLSELVSFGTWKAVAKYEHSPEESYTAYFDVREYVLPSFEVRLQPSDKFLYIDGNKNFHVSITARYLYGKKVEGVAFVLFGVKIDDAKKSIPDSLTRIPIIDGDGEAILKRDILRSRFQNLNELVGHTLYASVTVMTESGSDMVVTEQSGIHIVTSPYQIYFTKPPKYFKPGMPYELTVYVTNPDGSPAANVPVVSEAIHSEGTTLSDGTAKLILNTPLNTQSLPITVRTNHRDLPRERQATKSMTATAYQTQGGSGNYLHVAITSTEIKAGDNLPVSFNVRGNANSLNQIKYFTYLILTKGKIFKVGRQPRGEGQNLVTMNLRITPDLIPAFRFVAYYQVGNNEIVADSVWVDVKDTCMGMLVVKGASSRDNRIQKPGAAMKIKLEGDPGARVGLVAVDKAVYVLNDKYKISQAKIWDTIEKSDFGCTAGGGQDNLGVFEDAGLALTTSTNLNTKQRSVATCPQPTNRRRRSSVLLLDSKASKAAQFQEQNLHKCCEDGMHENPMGYTCEKRAKYTQEGDACKAAFLECCRYIKGIRDENQRESELFLARSDFEDEFFEEDNIISRSDFPDSWLWLTEDLNEPPNSQGISSKTLSFYLKDSITTWEVLAVSIAPTKGICVAEPYEITVMKDFFIDLRVPYSVVKNEQVEIRAVLYNYADEDIYVRVELLYNPAFCSASAEGQRYRVQVPVRALSSWAVPFVIVPLEQGLHDVEVKASVRGELASDGVRKKLKVVPEGERKNIVTVIELDPSVKGVGGTQEQTVVANKLDDKVPETEIETKFSVLGDPVAQIIENSIDGSKLSHLIITPSGSGEQNMITMTPSVIATYYLDATGQWENLGVDRRTEAVKQIMKGYAQQMVYKKADHSYASFVNRASSSWLTAYVVKVFAMAAKMVKDINHEIICGGVKWLILNRQQSDGVFKENAPVILGGMMGGTQGAEPEVSLTAFILVALLESRSVCNEHINILDNSINKATDYLLKKYEKLQRPYTTALTAYALAAAERLNDDRVLMAASTGRDRWEEHARTHNIEGTSYALLALLKMKKFAEAGPVVKWLIDQKYYGGTYGQTQATVMVFQALAEYEIQIPTHKDLNLNISINLPEREVPLRYSINYGNALVARTAETKLNEDFTVSASGDGKATMTILTVYNAQLREDANVCNKFHLNVSVENAQLNSKQAKGAKDTLRLKICTRYLGEVDSTMTIIDVSMLTGFLPDTEDLTRLSKGVDRYISKFEIDNNMVQKGTVVIYLDKVSHSEVECLNFKIHKHFEVGFIQPGPVKVYSYYNLDEQCTKFYHPDKGTGLLNKICHGNICRCAEQSCSLLNQQKKIDLPLRIQKACAPNVDYVYKAKLLRIEEKDGNDIYVMDVLEVIKGGTDRNPQAKARQYVSQRKCQEALNLNLNNDYLIWGLSSDLWPMKNDISYLITKNTWIERWPNEDECQDEEFQNLCDDFAQLSNTLTIFGCPT</sequence>
<dbReference type="EMBL" id="DQ110890">
    <property type="protein sequence ID" value="AAZ81954.1"/>
    <property type="molecule type" value="mRNA"/>
</dbReference>
<dbReference type="SMR" id="A0RZC6"/>
<dbReference type="MEROPS" id="I39.950"/>
<dbReference type="GO" id="GO:0005615">
    <property type="term" value="C:extracellular space"/>
    <property type="evidence" value="ECO:0007669"/>
    <property type="project" value="InterPro"/>
</dbReference>
<dbReference type="GO" id="GO:0004866">
    <property type="term" value="F:endopeptidase inhibitor activity"/>
    <property type="evidence" value="ECO:0007669"/>
    <property type="project" value="InterPro"/>
</dbReference>
<dbReference type="GO" id="GO:0046872">
    <property type="term" value="F:metal ion binding"/>
    <property type="evidence" value="ECO:0007669"/>
    <property type="project" value="UniProtKB-KW"/>
</dbReference>
<dbReference type="GO" id="GO:0090729">
    <property type="term" value="F:toxin activity"/>
    <property type="evidence" value="ECO:0007669"/>
    <property type="project" value="UniProtKB-KW"/>
</dbReference>
<dbReference type="GO" id="GO:0006956">
    <property type="term" value="P:complement activation"/>
    <property type="evidence" value="ECO:0007669"/>
    <property type="project" value="InterPro"/>
</dbReference>
<dbReference type="GO" id="GO:0006954">
    <property type="term" value="P:inflammatory response"/>
    <property type="evidence" value="ECO:0007669"/>
    <property type="project" value="UniProtKB-KW"/>
</dbReference>
<dbReference type="CDD" id="cd00017">
    <property type="entry name" value="ANATO"/>
    <property type="match status" value="1"/>
</dbReference>
<dbReference type="CDD" id="cd02896">
    <property type="entry name" value="complement_C3_C4_C5"/>
    <property type="match status" value="1"/>
</dbReference>
<dbReference type="CDD" id="cd03583">
    <property type="entry name" value="NTR_complement_C3"/>
    <property type="match status" value="1"/>
</dbReference>
<dbReference type="FunFam" id="2.20.130.20:FF:000001">
    <property type="entry name" value="Complement C3"/>
    <property type="match status" value="1"/>
</dbReference>
<dbReference type="FunFam" id="2.40.50.120:FF:000013">
    <property type="entry name" value="Complement C3"/>
    <property type="match status" value="1"/>
</dbReference>
<dbReference type="FunFam" id="2.60.40.10:FF:001013">
    <property type="entry name" value="Complement C3"/>
    <property type="match status" value="1"/>
</dbReference>
<dbReference type="FunFam" id="2.60.40.1930:FF:000008">
    <property type="entry name" value="Complement C3"/>
    <property type="match status" value="1"/>
</dbReference>
<dbReference type="FunFam" id="2.60.40.10:FF:000155">
    <property type="entry name" value="complement C3 isoform X1"/>
    <property type="match status" value="1"/>
</dbReference>
<dbReference type="FunFam" id="2.60.40.1940:FF:000001">
    <property type="entry name" value="Complement component C3"/>
    <property type="match status" value="1"/>
</dbReference>
<dbReference type="Gene3D" id="1.50.10.20">
    <property type="match status" value="1"/>
</dbReference>
<dbReference type="Gene3D" id="2.20.130.20">
    <property type="match status" value="1"/>
</dbReference>
<dbReference type="Gene3D" id="2.40.50.120">
    <property type="match status" value="1"/>
</dbReference>
<dbReference type="Gene3D" id="2.60.120.1540">
    <property type="match status" value="1"/>
</dbReference>
<dbReference type="Gene3D" id="2.60.40.1930">
    <property type="match status" value="3"/>
</dbReference>
<dbReference type="Gene3D" id="2.60.40.1940">
    <property type="match status" value="1"/>
</dbReference>
<dbReference type="Gene3D" id="6.20.50.160">
    <property type="match status" value="1"/>
</dbReference>
<dbReference type="Gene3D" id="2.60.40.690">
    <property type="entry name" value="Alpha-macroglobulin, receptor-binding domain"/>
    <property type="match status" value="1"/>
</dbReference>
<dbReference type="Gene3D" id="1.20.91.20">
    <property type="entry name" value="Anaphylotoxins (complement system)"/>
    <property type="match status" value="1"/>
</dbReference>
<dbReference type="Gene3D" id="2.60.40.10">
    <property type="entry name" value="Immunoglobulins"/>
    <property type="match status" value="2"/>
</dbReference>
<dbReference type="InterPro" id="IPR009048">
    <property type="entry name" value="A-macroglobulin_rcpt-bd"/>
</dbReference>
<dbReference type="InterPro" id="IPR036595">
    <property type="entry name" value="A-macroglobulin_rcpt-bd_sf"/>
</dbReference>
<dbReference type="InterPro" id="IPR050473">
    <property type="entry name" value="A2M/Complement_sys"/>
</dbReference>
<dbReference type="InterPro" id="IPR011625">
    <property type="entry name" value="A2M_N_BRD"/>
</dbReference>
<dbReference type="InterPro" id="IPR047565">
    <property type="entry name" value="Alpha-macroglob_thiol-ester_cl"/>
</dbReference>
<dbReference type="InterPro" id="IPR011626">
    <property type="entry name" value="Alpha-macroglobulin_TED"/>
</dbReference>
<dbReference type="InterPro" id="IPR000020">
    <property type="entry name" value="Anaphylatoxin/fibulin"/>
</dbReference>
<dbReference type="InterPro" id="IPR018081">
    <property type="entry name" value="Anaphylatoxin_comp_syst"/>
</dbReference>
<dbReference type="InterPro" id="IPR001840">
    <property type="entry name" value="Anaphylatoxn_comp_syst_dom"/>
</dbReference>
<dbReference type="InterPro" id="IPR041425">
    <property type="entry name" value="C3/4/5_MG1"/>
</dbReference>
<dbReference type="InterPro" id="IPR049466">
    <property type="entry name" value="C3_CUB1"/>
</dbReference>
<dbReference type="InterPro" id="IPR048848">
    <property type="entry name" value="C3_CUB2"/>
</dbReference>
<dbReference type="InterPro" id="IPR013783">
    <property type="entry name" value="Ig-like_fold"/>
</dbReference>
<dbReference type="InterPro" id="IPR001599">
    <property type="entry name" value="Macroglobln_a2"/>
</dbReference>
<dbReference type="InterPro" id="IPR002890">
    <property type="entry name" value="MG2"/>
</dbReference>
<dbReference type="InterPro" id="IPR041555">
    <property type="entry name" value="MG3"/>
</dbReference>
<dbReference type="InterPro" id="IPR040839">
    <property type="entry name" value="MG4"/>
</dbReference>
<dbReference type="InterPro" id="IPR001134">
    <property type="entry name" value="Netrin_domain"/>
</dbReference>
<dbReference type="InterPro" id="IPR018933">
    <property type="entry name" value="Netrin_module_non-TIMP"/>
</dbReference>
<dbReference type="InterPro" id="IPR035815">
    <property type="entry name" value="NTR_complement_C3"/>
</dbReference>
<dbReference type="InterPro" id="IPR008930">
    <property type="entry name" value="Terpenoid_cyclase/PrenylTrfase"/>
</dbReference>
<dbReference type="InterPro" id="IPR008993">
    <property type="entry name" value="TIMP-like_OB-fold"/>
</dbReference>
<dbReference type="PANTHER" id="PTHR11412:SF81">
    <property type="entry name" value="COMPLEMENT C3"/>
    <property type="match status" value="1"/>
</dbReference>
<dbReference type="PANTHER" id="PTHR11412">
    <property type="entry name" value="MACROGLOBULIN / COMPLEMENT"/>
    <property type="match status" value="1"/>
</dbReference>
<dbReference type="Pfam" id="PF00207">
    <property type="entry name" value="A2M"/>
    <property type="match status" value="1"/>
</dbReference>
<dbReference type="Pfam" id="PF07703">
    <property type="entry name" value="A2M_BRD"/>
    <property type="match status" value="1"/>
</dbReference>
<dbReference type="Pfam" id="PF07677">
    <property type="entry name" value="A2M_recep"/>
    <property type="match status" value="1"/>
</dbReference>
<dbReference type="Pfam" id="PF01821">
    <property type="entry name" value="ANATO"/>
    <property type="match status" value="1"/>
</dbReference>
<dbReference type="Pfam" id="PF21406">
    <property type="entry name" value="C3_CUB1"/>
    <property type="match status" value="1"/>
</dbReference>
<dbReference type="Pfam" id="PF21308">
    <property type="entry name" value="C3_CUB2"/>
    <property type="match status" value="1"/>
</dbReference>
<dbReference type="Pfam" id="PF17790">
    <property type="entry name" value="MG1"/>
    <property type="match status" value="1"/>
</dbReference>
<dbReference type="Pfam" id="PF01835">
    <property type="entry name" value="MG2"/>
    <property type="match status" value="1"/>
</dbReference>
<dbReference type="Pfam" id="PF17791">
    <property type="entry name" value="MG3"/>
    <property type="match status" value="1"/>
</dbReference>
<dbReference type="Pfam" id="PF17789">
    <property type="entry name" value="MG4"/>
    <property type="match status" value="1"/>
</dbReference>
<dbReference type="Pfam" id="PF01759">
    <property type="entry name" value="NTR"/>
    <property type="match status" value="1"/>
</dbReference>
<dbReference type="Pfam" id="PF07678">
    <property type="entry name" value="TED_complement"/>
    <property type="match status" value="2"/>
</dbReference>
<dbReference type="PRINTS" id="PR00004">
    <property type="entry name" value="ANAPHYLATOXN"/>
</dbReference>
<dbReference type="SMART" id="SM01360">
    <property type="entry name" value="A2M"/>
    <property type="match status" value="1"/>
</dbReference>
<dbReference type="SMART" id="SM01359">
    <property type="entry name" value="A2M_N_2"/>
    <property type="match status" value="1"/>
</dbReference>
<dbReference type="SMART" id="SM01361">
    <property type="entry name" value="A2M_recep"/>
    <property type="match status" value="1"/>
</dbReference>
<dbReference type="SMART" id="SM00104">
    <property type="entry name" value="ANATO"/>
    <property type="match status" value="1"/>
</dbReference>
<dbReference type="SMART" id="SM00643">
    <property type="entry name" value="C345C"/>
    <property type="match status" value="1"/>
</dbReference>
<dbReference type="SMART" id="SM01419">
    <property type="entry name" value="Thiol-ester_cl"/>
    <property type="match status" value="1"/>
</dbReference>
<dbReference type="SUPFAM" id="SSF49410">
    <property type="entry name" value="Alpha-macroglobulin receptor domain"/>
    <property type="match status" value="1"/>
</dbReference>
<dbReference type="SUPFAM" id="SSF47686">
    <property type="entry name" value="Anaphylotoxins (complement system)"/>
    <property type="match status" value="1"/>
</dbReference>
<dbReference type="SUPFAM" id="SSF48239">
    <property type="entry name" value="Terpenoid cyclases/Protein prenyltransferases"/>
    <property type="match status" value="1"/>
</dbReference>
<dbReference type="SUPFAM" id="SSF50242">
    <property type="entry name" value="TIMP-like"/>
    <property type="match status" value="1"/>
</dbReference>
<dbReference type="PROSITE" id="PS01177">
    <property type="entry name" value="ANAPHYLATOXIN_1"/>
    <property type="match status" value="1"/>
</dbReference>
<dbReference type="PROSITE" id="PS01178">
    <property type="entry name" value="ANAPHYLATOXIN_2"/>
    <property type="match status" value="1"/>
</dbReference>
<dbReference type="PROSITE" id="PS50189">
    <property type="entry name" value="NTR"/>
    <property type="match status" value="1"/>
</dbReference>
<evidence type="ECO:0000250" key="1"/>
<evidence type="ECO:0000255" key="2"/>
<evidence type="ECO:0000255" key="3">
    <source>
        <dbReference type="PROSITE-ProRule" id="PRU00022"/>
    </source>
</evidence>
<evidence type="ECO:0000255" key="4">
    <source>
        <dbReference type="PROSITE-ProRule" id="PRU00295"/>
    </source>
</evidence>
<evidence type="ECO:0000305" key="5"/>
<protein>
    <recommendedName>
        <fullName>A.superbus venom factor 2</fullName>
        <shortName>AVF-2</shortName>
    </recommendedName>
    <alternativeName>
        <fullName>CVF-like</fullName>
    </alternativeName>
    <alternativeName>
        <fullName>Complement C3 homolog</fullName>
    </alternativeName>
    <component>
        <recommendedName>
            <fullName>AVF-2 alpha chain</fullName>
        </recommendedName>
    </component>
    <component>
        <recommendedName>
            <fullName>AVF-2 gamma chain</fullName>
        </recommendedName>
    </component>
    <component>
        <recommendedName>
            <fullName>AVF-2 beta chain</fullName>
        </recommendedName>
    </component>
</protein>
<name>VCO32_AUSSU</name>
<keyword id="KW-0165">Cleavage on pair of basic residues</keyword>
<keyword id="KW-1216">Complement system impairing toxin</keyword>
<keyword id="KW-1015">Disulfide bond</keyword>
<keyword id="KW-0325">Glycoprotein</keyword>
<keyword id="KW-0395">Inflammatory response</keyword>
<keyword id="KW-0460">Magnesium</keyword>
<keyword id="KW-0479">Metal-binding</keyword>
<keyword id="KW-0964">Secreted</keyword>
<keyword id="KW-0732">Signal</keyword>
<keyword id="KW-0800">Toxin</keyword>
<reference key="1">
    <citation type="journal article" date="2007" name="Toxicon">
        <title>Molecular isoforms of cobra venom factor-like proteins in the venom of Austrelaps superbus.</title>
        <authorList>
            <person name="Rehana S."/>
            <person name="Kini R.M."/>
        </authorList>
    </citation>
    <scope>NUCLEOTIDE SEQUENCE [MRNA]</scope>
    <source>
        <tissue>Venom gland</tissue>
    </source>
</reference>
<feature type="signal peptide" evidence="2">
    <location>
        <begin position="1"/>
        <end position="22"/>
    </location>
</feature>
<feature type="chain" id="PRO_0000418040" description="A.superbus venom factor 2">
    <location>
        <begin position="23"/>
        <end position="1651"/>
    </location>
</feature>
<feature type="chain" id="PRO_0000418041" description="AVF-2 alpha chain">
    <location>
        <begin position="23"/>
        <end position="656"/>
    </location>
</feature>
<feature type="propeptide" id="PRO_0000418042" evidence="1">
    <location>
        <begin position="657"/>
        <end position="739"/>
    </location>
</feature>
<feature type="chain" id="PRO_0000418043" description="AVF-2 gamma chain">
    <location>
        <begin position="740"/>
        <end position="991"/>
    </location>
</feature>
<feature type="propeptide" id="PRO_0000418044" evidence="1">
    <location>
        <begin position="992"/>
        <end position="1269"/>
    </location>
</feature>
<feature type="chain" id="PRO_0000418045" description="AVF-2 beta chain">
    <location>
        <begin position="1270"/>
        <end position="1651"/>
    </location>
</feature>
<feature type="domain" description="Anaphylatoxin-like" evidence="3">
    <location>
        <begin position="684"/>
        <end position="719"/>
    </location>
</feature>
<feature type="domain" description="NTR" evidence="4">
    <location>
        <begin position="1506"/>
        <end position="1649"/>
    </location>
</feature>
<feature type="region of interest" description="C3a-like domain" evidence="1">
    <location>
        <begin position="661"/>
        <end position="739"/>
    </location>
</feature>
<feature type="region of interest" description="Factor B binding site" evidence="1">
    <location>
        <begin position="743"/>
        <end position="754"/>
    </location>
</feature>
<feature type="region of interest" description="C3d-like domain" evidence="1">
    <location>
        <begin position="992"/>
        <end position="1269"/>
    </location>
</feature>
<feature type="region of interest" description="Factor H binding site" evidence="1">
    <location>
        <begin position="1197"/>
        <end position="1259"/>
    </location>
</feature>
<feature type="binding site" evidence="1">
    <location>
        <position position="519"/>
    </location>
    <ligand>
        <name>Mg(2+)</name>
        <dbReference type="ChEBI" id="CHEBI:18420"/>
    </ligand>
</feature>
<feature type="binding site" evidence="1">
    <location>
        <position position="542"/>
    </location>
    <ligand>
        <name>Mg(2+)</name>
        <dbReference type="ChEBI" id="CHEBI:18420"/>
    </ligand>
</feature>
<feature type="binding site" evidence="1">
    <location>
        <position position="543"/>
    </location>
    <ligand>
        <name>Mg(2+)</name>
        <dbReference type="ChEBI" id="CHEBI:18420"/>
    </ligand>
</feature>
<feature type="binding site" evidence="1">
    <location>
        <position position="545"/>
    </location>
    <ligand>
        <name>Mg(2+)</name>
        <dbReference type="ChEBI" id="CHEBI:18420"/>
    </ligand>
</feature>
<feature type="glycosylation site" description="N-linked (GlcNAc...) asparagine" evidence="2">
    <location>
        <position position="189"/>
    </location>
</feature>
<feature type="glycosylation site" description="N-linked (GlcNAc...) asparagine" evidence="2">
    <location>
        <position position="1282"/>
    </location>
</feature>
<feature type="glycosylation site" description="N-linked (GlcNAc...) asparagine" evidence="2">
    <location>
        <position position="1352"/>
    </location>
</feature>
<feature type="disulfide bond" description="Interchain (between alpha and gamma chains)" evidence="3 4">
    <location>
        <begin position="547"/>
        <end position="808"/>
    </location>
</feature>
<feature type="disulfide bond" evidence="1">
    <location>
        <begin position="616"/>
        <end position="651"/>
    </location>
</feature>
<feature type="disulfide bond" evidence="1">
    <location>
        <begin position="684"/>
        <end position="711"/>
    </location>
</feature>
<feature type="disulfide bond" evidence="1">
    <location>
        <begin position="685"/>
        <end position="718"/>
    </location>
</feature>
<feature type="disulfide bond" evidence="1">
    <location>
        <begin position="698"/>
        <end position="719"/>
    </location>
</feature>
<feature type="disulfide bond" description="Interchain (between gamma and beta chains)" evidence="3 4">
    <location>
        <begin position="864"/>
        <end position="1501"/>
    </location>
</feature>
<feature type="disulfide bond" evidence="1">
    <location>
        <begin position="1346"/>
        <end position="1477"/>
    </location>
</feature>
<feature type="disulfide bond" evidence="1">
    <location>
        <begin position="1377"/>
        <end position="1446"/>
    </location>
</feature>
<feature type="disulfide bond" evidence="1">
    <location>
        <begin position="1494"/>
        <end position="1499"/>
    </location>
</feature>
<feature type="disulfide bond" evidence="1">
    <location>
        <begin position="1506"/>
        <end position="1578"/>
    </location>
</feature>
<feature type="disulfide bond" evidence="1">
    <location>
        <begin position="1525"/>
        <end position="1649"/>
    </location>
</feature>
<feature type="disulfide bond" evidence="1">
    <location>
        <begin position="1625"/>
        <end position="1634"/>
    </location>
</feature>
<organism>
    <name type="scientific">Austrelaps superbus</name>
    <name type="common">Lowland copperhead snake</name>
    <name type="synonym">Hoplocephalus superbus</name>
    <dbReference type="NCBI Taxonomy" id="29156"/>
    <lineage>
        <taxon>Eukaryota</taxon>
        <taxon>Metazoa</taxon>
        <taxon>Chordata</taxon>
        <taxon>Craniata</taxon>
        <taxon>Vertebrata</taxon>
        <taxon>Euteleostomi</taxon>
        <taxon>Lepidosauria</taxon>
        <taxon>Squamata</taxon>
        <taxon>Bifurcata</taxon>
        <taxon>Unidentata</taxon>
        <taxon>Episquamata</taxon>
        <taxon>Toxicofera</taxon>
        <taxon>Serpentes</taxon>
        <taxon>Colubroidea</taxon>
        <taxon>Elapidae</taxon>
        <taxon>Hydrophiinae</taxon>
        <taxon>Austrelaps</taxon>
    </lineage>
</organism>
<comment type="function">
    <text evidence="1">Complement-activating protein in snake venom. It is a structural and functional analog of complement component C3b, the activated form of C3. It binds factor B (CFB), which is subsequently cleaved by factor D (CFD) to form the bimolecular complex AVF/Bb. AVF/Bb is a C3 convertase that cleaves complement component C3, but not C5 (as do CVF/Bb) (By similarity).</text>
</comment>
<comment type="subunit">
    <text evidence="1">Heterotrimer of alpha, beta and gamma chains; disulfide-linked. Is active with factor B in the presence of factor D (By similarity).</text>
</comment>
<comment type="subcellular location">
    <subcellularLocation>
        <location evidence="1">Secreted</location>
    </subcellularLocation>
</comment>
<comment type="tissue specificity">
    <text>Expressed by the venom gland.</text>
</comment>
<comment type="PTM">
    <text evidence="1">First processed by the removal of 4 Arg residues by furin-type protease, forming two chains, alpha and gamma/beta precursor, linked by a disulfide bond. This mature AVF is composed of three chains: alpha, gamma and beta (By similarity).</text>
</comment>
<comment type="miscellaneous">
    <text>Is expressed in small quantities.</text>
</comment>
<comment type="similarity">
    <text evidence="5">Belongs to the venom complement C3 homolog family.</text>
</comment>
<comment type="caution">
    <text evidence="5">Lacks the typical Cys at position 1000 required for the thioester bond formation.</text>
</comment>